<proteinExistence type="inferred from homology"/>
<evidence type="ECO:0000255" key="1">
    <source>
        <dbReference type="PROSITE-ProRule" id="PRU10089"/>
    </source>
</evidence>
<evidence type="ECO:0000305" key="2"/>
<gene>
    <name type="ordered locus">MIMI_L477</name>
</gene>
<feature type="chain" id="PRO_0000250640" description="Uncharacterized peptidase C1-like protein L477">
    <location>
        <begin position="1"/>
        <end position="311"/>
    </location>
</feature>
<sequence length="311" mass="35342">MDTSTISRNFGYIKSKPDKRDVLITFDKKTIKTFKLTANIKPKIIDGIFDLRKIVTLPQALSEIDQGTLGSCTANAIAYAYAFAEIKQHNRNTFMPSRLFIYYNERMLENSIDEDSGAQIRTGIKTINKYGVCDEHHWVYDPLKFRVKPPIEAYEEAKVAKSVKYARIDFTKDTTIDDRIEHIKRALLSGFPIVFGFVVFESFMSQDVTKTGIVNMPKSYEQEIGGHAVCAVGFNENDKTFIVKNSWGSKWGLNGYFNMPYKYVADENLASDFWIIQEVTDPIINNFDPNDINPDAINLDVNINSGGVVHN</sequence>
<organism>
    <name type="scientific">Acanthamoeba polyphaga mimivirus</name>
    <name type="common">APMV</name>
    <dbReference type="NCBI Taxonomy" id="212035"/>
    <lineage>
        <taxon>Viruses</taxon>
        <taxon>Varidnaviria</taxon>
        <taxon>Bamfordvirae</taxon>
        <taxon>Nucleocytoviricota</taxon>
        <taxon>Megaviricetes</taxon>
        <taxon>Imitervirales</taxon>
        <taxon>Mimiviridae</taxon>
        <taxon>Megamimivirinae</taxon>
        <taxon>Mimivirus</taxon>
        <taxon>Mimivirus bradfordmassiliense</taxon>
    </lineage>
</organism>
<dbReference type="EMBL" id="AY653733">
    <property type="protein sequence ID" value="AAV50743.1"/>
    <property type="molecule type" value="Genomic_DNA"/>
</dbReference>
<dbReference type="SMR" id="Q5UQE9"/>
<dbReference type="MEROPS" id="C01.128"/>
<dbReference type="KEGG" id="vg:9925103"/>
<dbReference type="OrthoDB" id="8728at10239"/>
<dbReference type="Proteomes" id="UP000001134">
    <property type="component" value="Genome"/>
</dbReference>
<dbReference type="GO" id="GO:0008234">
    <property type="term" value="F:cysteine-type peptidase activity"/>
    <property type="evidence" value="ECO:0007669"/>
    <property type="project" value="InterPro"/>
</dbReference>
<dbReference type="GO" id="GO:0006508">
    <property type="term" value="P:proteolysis"/>
    <property type="evidence" value="ECO:0007669"/>
    <property type="project" value="InterPro"/>
</dbReference>
<dbReference type="CDD" id="cd02619">
    <property type="entry name" value="Peptidase_C1"/>
    <property type="match status" value="1"/>
</dbReference>
<dbReference type="Gene3D" id="3.90.70.10">
    <property type="entry name" value="Cysteine proteinases"/>
    <property type="match status" value="1"/>
</dbReference>
<dbReference type="InterPro" id="IPR038765">
    <property type="entry name" value="Papain-like_cys_pep_sf"/>
</dbReference>
<dbReference type="InterPro" id="IPR025660">
    <property type="entry name" value="Pept_his_AS"/>
</dbReference>
<dbReference type="InterPro" id="IPR013128">
    <property type="entry name" value="Peptidase_C1A"/>
</dbReference>
<dbReference type="InterPro" id="IPR000668">
    <property type="entry name" value="Peptidase_C1A_C"/>
</dbReference>
<dbReference type="PANTHER" id="PTHR12411">
    <property type="entry name" value="CYSTEINE PROTEASE FAMILY C1-RELATED"/>
    <property type="match status" value="1"/>
</dbReference>
<dbReference type="Pfam" id="PF00112">
    <property type="entry name" value="Peptidase_C1"/>
    <property type="match status" value="1"/>
</dbReference>
<dbReference type="SMART" id="SM00645">
    <property type="entry name" value="Pept_C1"/>
    <property type="match status" value="1"/>
</dbReference>
<dbReference type="SUPFAM" id="SSF54001">
    <property type="entry name" value="Cysteine proteinases"/>
    <property type="match status" value="1"/>
</dbReference>
<dbReference type="PROSITE" id="PS00639">
    <property type="entry name" value="THIOL_PROTEASE_HIS"/>
    <property type="match status" value="1"/>
</dbReference>
<name>YL477_MIMIV</name>
<accession>Q5UQE9</accession>
<comment type="similarity">
    <text evidence="1">Belongs to the peptidase C1 family.</text>
</comment>
<comment type="caution">
    <text evidence="2">Although related to peptidase C1 family, it lacks conserved active site residues.</text>
</comment>
<protein>
    <recommendedName>
        <fullName>Uncharacterized peptidase C1-like protein L477</fullName>
    </recommendedName>
</protein>
<reference key="1">
    <citation type="journal article" date="2004" name="Science">
        <title>The 1.2-megabase genome sequence of Mimivirus.</title>
        <authorList>
            <person name="Raoult D."/>
            <person name="Audic S."/>
            <person name="Robert C."/>
            <person name="Abergel C."/>
            <person name="Renesto P."/>
            <person name="Ogata H."/>
            <person name="La Scola B."/>
            <person name="Susan M."/>
            <person name="Claverie J.-M."/>
        </authorList>
    </citation>
    <scope>NUCLEOTIDE SEQUENCE [LARGE SCALE GENOMIC DNA]</scope>
    <source>
        <strain>Rowbotham-Bradford</strain>
    </source>
</reference>
<keyword id="KW-1185">Reference proteome</keyword>
<organismHost>
    <name type="scientific">Acanthamoeba polyphaga</name>
    <name type="common">Amoeba</name>
    <dbReference type="NCBI Taxonomy" id="5757"/>
</organismHost>